<protein>
    <recommendedName>
        <fullName evidence="1">Gamma-glutamyl phosphate reductase</fullName>
        <shortName evidence="1">GPR</shortName>
        <ecNumber evidence="1">1.2.1.41</ecNumber>
    </recommendedName>
    <alternativeName>
        <fullName evidence="1">Glutamate-5-semialdehyde dehydrogenase</fullName>
    </alternativeName>
    <alternativeName>
        <fullName evidence="1">Glutamyl-gamma-semialdehyde dehydrogenase</fullName>
        <shortName evidence="1">GSA dehydrogenase</shortName>
    </alternativeName>
</protein>
<accession>B1L9J9</accession>
<gene>
    <name evidence="1" type="primary">proA</name>
    <name type="ordered locus">TRQ2_0644</name>
</gene>
<comment type="function">
    <text evidence="1">Catalyzes the NADPH-dependent reduction of L-glutamate 5-phosphate into L-glutamate 5-semialdehyde and phosphate. The product spontaneously undergoes cyclization to form 1-pyrroline-5-carboxylate.</text>
</comment>
<comment type="catalytic activity">
    <reaction evidence="1">
        <text>L-glutamate 5-semialdehyde + phosphate + NADP(+) = L-glutamyl 5-phosphate + NADPH + H(+)</text>
        <dbReference type="Rhea" id="RHEA:19541"/>
        <dbReference type="ChEBI" id="CHEBI:15378"/>
        <dbReference type="ChEBI" id="CHEBI:43474"/>
        <dbReference type="ChEBI" id="CHEBI:57783"/>
        <dbReference type="ChEBI" id="CHEBI:58066"/>
        <dbReference type="ChEBI" id="CHEBI:58274"/>
        <dbReference type="ChEBI" id="CHEBI:58349"/>
        <dbReference type="EC" id="1.2.1.41"/>
    </reaction>
</comment>
<comment type="pathway">
    <text evidence="1">Amino-acid biosynthesis; L-proline biosynthesis; L-glutamate 5-semialdehyde from L-glutamate: step 2/2.</text>
</comment>
<comment type="subcellular location">
    <subcellularLocation>
        <location evidence="1">Cytoplasm</location>
    </subcellularLocation>
</comment>
<comment type="similarity">
    <text evidence="1">Belongs to the gamma-glutamyl phosphate reductase family.</text>
</comment>
<sequence length="415" mass="46361">MDELLEKAKKVREAWDVLRNATTREKNKAIKKIAEKLDERRKEILEANRIDVEKARERGVKESLVDRLALNDKRIDEMIKACETVIGLKDPVGEVIDSWVREDGLRIARVRVPIGPIGIIYESRPNVTVETTILALKSGNTILLRGGSDALNSNKAIVSAIKEALKETEIPESSVEFIENTDRSLVLEMIRLREYLSLVIPRGGYGLISFVRDNATVPVLETGVGNCHIFVDESADLKKAVPVIINAKTQRPGTCNAAEKLLVHEKIAKEFLPVIVEELRKHGVEVRGCEKTREIVPDVVPATEDDWPTEYLDLIIAIKVVKNVDEAIEHIKKYSTGHSESILTENYSNAKKFVSEIDAAAVYVNASTRFTDGGQFGFGAEIGISTQRFHARGPVGLRELTTYKFVVLGNYHVRE</sequence>
<feature type="chain" id="PRO_1000193671" description="Gamma-glutamyl phosphate reductase">
    <location>
        <begin position="1"/>
        <end position="415"/>
    </location>
</feature>
<dbReference type="EC" id="1.2.1.41" evidence="1"/>
<dbReference type="EMBL" id="CP000969">
    <property type="protein sequence ID" value="ACB08997.1"/>
    <property type="molecule type" value="Genomic_DNA"/>
</dbReference>
<dbReference type="RefSeq" id="WP_012310651.1">
    <property type="nucleotide sequence ID" value="NC_010483.1"/>
</dbReference>
<dbReference type="SMR" id="B1L9J9"/>
<dbReference type="KEGG" id="trq:TRQ2_0644"/>
<dbReference type="HOGENOM" id="CLU_030231_0_0_0"/>
<dbReference type="UniPathway" id="UPA00098">
    <property type="reaction ID" value="UER00360"/>
</dbReference>
<dbReference type="Proteomes" id="UP000001687">
    <property type="component" value="Chromosome"/>
</dbReference>
<dbReference type="GO" id="GO:0005737">
    <property type="term" value="C:cytoplasm"/>
    <property type="evidence" value="ECO:0007669"/>
    <property type="project" value="UniProtKB-SubCell"/>
</dbReference>
<dbReference type="GO" id="GO:0004350">
    <property type="term" value="F:glutamate-5-semialdehyde dehydrogenase activity"/>
    <property type="evidence" value="ECO:0007669"/>
    <property type="project" value="UniProtKB-UniRule"/>
</dbReference>
<dbReference type="GO" id="GO:0050661">
    <property type="term" value="F:NADP binding"/>
    <property type="evidence" value="ECO:0007669"/>
    <property type="project" value="InterPro"/>
</dbReference>
<dbReference type="GO" id="GO:0055129">
    <property type="term" value="P:L-proline biosynthetic process"/>
    <property type="evidence" value="ECO:0007669"/>
    <property type="project" value="UniProtKB-UniRule"/>
</dbReference>
<dbReference type="CDD" id="cd07079">
    <property type="entry name" value="ALDH_F18-19_ProA-GPR"/>
    <property type="match status" value="1"/>
</dbReference>
<dbReference type="FunFam" id="3.40.309.10:FF:000006">
    <property type="entry name" value="Gamma-glutamyl phosphate reductase"/>
    <property type="match status" value="1"/>
</dbReference>
<dbReference type="Gene3D" id="3.40.605.10">
    <property type="entry name" value="Aldehyde Dehydrogenase, Chain A, domain 1"/>
    <property type="match status" value="1"/>
</dbReference>
<dbReference type="Gene3D" id="3.40.309.10">
    <property type="entry name" value="Aldehyde Dehydrogenase, Chain A, domain 2"/>
    <property type="match status" value="1"/>
</dbReference>
<dbReference type="HAMAP" id="MF_00412">
    <property type="entry name" value="ProA"/>
    <property type="match status" value="1"/>
</dbReference>
<dbReference type="InterPro" id="IPR016161">
    <property type="entry name" value="Ald_DH/histidinol_DH"/>
</dbReference>
<dbReference type="InterPro" id="IPR016163">
    <property type="entry name" value="Ald_DH_C"/>
</dbReference>
<dbReference type="InterPro" id="IPR016162">
    <property type="entry name" value="Ald_DH_N"/>
</dbReference>
<dbReference type="InterPro" id="IPR015590">
    <property type="entry name" value="Aldehyde_DH_dom"/>
</dbReference>
<dbReference type="InterPro" id="IPR020593">
    <property type="entry name" value="G-glutamylP_reductase_CS"/>
</dbReference>
<dbReference type="InterPro" id="IPR012134">
    <property type="entry name" value="Glu-5-SA_DH"/>
</dbReference>
<dbReference type="InterPro" id="IPR000965">
    <property type="entry name" value="GPR_dom"/>
</dbReference>
<dbReference type="NCBIfam" id="NF001221">
    <property type="entry name" value="PRK00197.1"/>
    <property type="match status" value="1"/>
</dbReference>
<dbReference type="NCBIfam" id="TIGR00407">
    <property type="entry name" value="proA"/>
    <property type="match status" value="1"/>
</dbReference>
<dbReference type="PANTHER" id="PTHR11063:SF8">
    <property type="entry name" value="DELTA-1-PYRROLINE-5-CARBOXYLATE SYNTHASE"/>
    <property type="match status" value="1"/>
</dbReference>
<dbReference type="PANTHER" id="PTHR11063">
    <property type="entry name" value="GLUTAMATE SEMIALDEHYDE DEHYDROGENASE"/>
    <property type="match status" value="1"/>
</dbReference>
<dbReference type="Pfam" id="PF00171">
    <property type="entry name" value="Aldedh"/>
    <property type="match status" value="2"/>
</dbReference>
<dbReference type="PIRSF" id="PIRSF000151">
    <property type="entry name" value="GPR"/>
    <property type="match status" value="1"/>
</dbReference>
<dbReference type="SUPFAM" id="SSF53720">
    <property type="entry name" value="ALDH-like"/>
    <property type="match status" value="1"/>
</dbReference>
<dbReference type="PROSITE" id="PS01223">
    <property type="entry name" value="PROA"/>
    <property type="match status" value="1"/>
</dbReference>
<reference key="1">
    <citation type="journal article" date="2011" name="J. Bacteriol.">
        <title>Genome sequence of Thermotoga sp. strain RQ2, a hyperthermophilic bacterium isolated from a geothermally heated region of the seafloor near Ribeira Quente, the Azores.</title>
        <authorList>
            <person name="Swithers K.S."/>
            <person name="DiPippo J.L."/>
            <person name="Bruce D.C."/>
            <person name="Detter C."/>
            <person name="Tapia R."/>
            <person name="Han S."/>
            <person name="Saunders E."/>
            <person name="Goodwin L.A."/>
            <person name="Han J."/>
            <person name="Woyke T."/>
            <person name="Pitluck S."/>
            <person name="Pennacchio L."/>
            <person name="Nolan M."/>
            <person name="Mikhailova N."/>
            <person name="Lykidis A."/>
            <person name="Land M.L."/>
            <person name="Brettin T."/>
            <person name="Stetter K.O."/>
            <person name="Nelson K.E."/>
            <person name="Gogarten J.P."/>
            <person name="Noll K.M."/>
        </authorList>
    </citation>
    <scope>NUCLEOTIDE SEQUENCE [LARGE SCALE GENOMIC DNA]</scope>
    <source>
        <strain>RQ2</strain>
    </source>
</reference>
<name>PROA_THESQ</name>
<proteinExistence type="inferred from homology"/>
<organism>
    <name type="scientific">Thermotoga sp. (strain RQ2)</name>
    <dbReference type="NCBI Taxonomy" id="126740"/>
    <lineage>
        <taxon>Bacteria</taxon>
        <taxon>Thermotogati</taxon>
        <taxon>Thermotogota</taxon>
        <taxon>Thermotogae</taxon>
        <taxon>Thermotogales</taxon>
        <taxon>Thermotogaceae</taxon>
        <taxon>Thermotoga</taxon>
    </lineage>
</organism>
<keyword id="KW-0028">Amino-acid biosynthesis</keyword>
<keyword id="KW-0963">Cytoplasm</keyword>
<keyword id="KW-0521">NADP</keyword>
<keyword id="KW-0560">Oxidoreductase</keyword>
<keyword id="KW-0641">Proline biosynthesis</keyword>
<evidence type="ECO:0000255" key="1">
    <source>
        <dbReference type="HAMAP-Rule" id="MF_00412"/>
    </source>
</evidence>